<comment type="function">
    <text evidence="1">This protein binds to a specific region on the 26S rRNA.</text>
</comment>
<comment type="function">
    <text evidence="2">Component of the ribosome, a large ribonucleoprotein complex responsible for the synthesis of proteins in the cell. The small ribosomal subunit (SSU) binds messenger RNAs (mRNAs) and translates the encoded message by selecting cognate aminoacyl-transfer RNA (tRNA) molecules. The large subunit (LSU) contains the ribosomal catalytic site termed the peptidyl transferase center (PTC), which catalyzes the formation of peptide bonds, thereby polymerizing the amino acids delivered by tRNAs into a polypeptide chain. The nascent polypeptides leave the ribosome through a tunnel in the LSU and interact with protein factors that function in enzymatic processing, targeting, and the membrane insertion of nascent chains at the exit of the ribosomal tunnel. uL23 is a major component of the universal docking site for these factors at the polypeptide exit tunnel.</text>
</comment>
<comment type="subunit">
    <text evidence="2">Component of the large ribosomal subunit (LSU). Mature yeast ribosomes consist of a small (40S) and a large (60S) subunit. The 40S small subunit contains 1 molecule of ribosomal RNA (18S rRNA) and at least 33 different proteins. The large 60S subunit contains 3 rRNA molecules (25S, 5.8S and 5S rRNA) and at least 46 different proteins. uL23 is associated with the polypeptide exit tunnel.</text>
</comment>
<comment type="subcellular location">
    <subcellularLocation>
        <location evidence="3">Cytoplasm</location>
    </subcellularLocation>
</comment>
<comment type="miscellaneous">
    <text>There are 2 genes for uL23 in S.pombe.</text>
</comment>
<comment type="similarity">
    <text evidence="5">Belongs to the universal ribosomal protein uL23 family.</text>
</comment>
<accession>Q10330</accession>
<accession>Q9URI6</accession>
<name>RL25A_SCHPO</name>
<reference key="1">
    <citation type="journal article" date="2002" name="Nature">
        <title>The genome sequence of Schizosaccharomyces pombe.</title>
        <authorList>
            <person name="Wood V."/>
            <person name="Gwilliam R."/>
            <person name="Rajandream M.A."/>
            <person name="Lyne M.H."/>
            <person name="Lyne R."/>
            <person name="Stewart A."/>
            <person name="Sgouros J.G."/>
            <person name="Peat N."/>
            <person name="Hayles J."/>
            <person name="Baker S.G."/>
            <person name="Basham D."/>
            <person name="Bowman S."/>
            <person name="Brooks K."/>
            <person name="Brown D."/>
            <person name="Brown S."/>
            <person name="Chillingworth T."/>
            <person name="Churcher C.M."/>
            <person name="Collins M."/>
            <person name="Connor R."/>
            <person name="Cronin A."/>
            <person name="Davis P."/>
            <person name="Feltwell T."/>
            <person name="Fraser A."/>
            <person name="Gentles S."/>
            <person name="Goble A."/>
            <person name="Hamlin N."/>
            <person name="Harris D.E."/>
            <person name="Hidalgo J."/>
            <person name="Hodgson G."/>
            <person name="Holroyd S."/>
            <person name="Hornsby T."/>
            <person name="Howarth S."/>
            <person name="Huckle E.J."/>
            <person name="Hunt S."/>
            <person name="Jagels K."/>
            <person name="James K.D."/>
            <person name="Jones L."/>
            <person name="Jones M."/>
            <person name="Leather S."/>
            <person name="McDonald S."/>
            <person name="McLean J."/>
            <person name="Mooney P."/>
            <person name="Moule S."/>
            <person name="Mungall K.L."/>
            <person name="Murphy L.D."/>
            <person name="Niblett D."/>
            <person name="Odell C."/>
            <person name="Oliver K."/>
            <person name="O'Neil S."/>
            <person name="Pearson D."/>
            <person name="Quail M.A."/>
            <person name="Rabbinowitsch E."/>
            <person name="Rutherford K.M."/>
            <person name="Rutter S."/>
            <person name="Saunders D."/>
            <person name="Seeger K."/>
            <person name="Sharp S."/>
            <person name="Skelton J."/>
            <person name="Simmonds M.N."/>
            <person name="Squares R."/>
            <person name="Squares S."/>
            <person name="Stevens K."/>
            <person name="Taylor K."/>
            <person name="Taylor R.G."/>
            <person name="Tivey A."/>
            <person name="Walsh S.V."/>
            <person name="Warren T."/>
            <person name="Whitehead S."/>
            <person name="Woodward J.R."/>
            <person name="Volckaert G."/>
            <person name="Aert R."/>
            <person name="Robben J."/>
            <person name="Grymonprez B."/>
            <person name="Weltjens I."/>
            <person name="Vanstreels E."/>
            <person name="Rieger M."/>
            <person name="Schaefer M."/>
            <person name="Mueller-Auer S."/>
            <person name="Gabel C."/>
            <person name="Fuchs M."/>
            <person name="Duesterhoeft A."/>
            <person name="Fritzc C."/>
            <person name="Holzer E."/>
            <person name="Moestl D."/>
            <person name="Hilbert H."/>
            <person name="Borzym K."/>
            <person name="Langer I."/>
            <person name="Beck A."/>
            <person name="Lehrach H."/>
            <person name="Reinhardt R."/>
            <person name="Pohl T.M."/>
            <person name="Eger P."/>
            <person name="Zimmermann W."/>
            <person name="Wedler H."/>
            <person name="Wambutt R."/>
            <person name="Purnelle B."/>
            <person name="Goffeau A."/>
            <person name="Cadieu E."/>
            <person name="Dreano S."/>
            <person name="Gloux S."/>
            <person name="Lelaure V."/>
            <person name="Mottier S."/>
            <person name="Galibert F."/>
            <person name="Aves S.J."/>
            <person name="Xiang Z."/>
            <person name="Hunt C."/>
            <person name="Moore K."/>
            <person name="Hurst S.M."/>
            <person name="Lucas M."/>
            <person name="Rochet M."/>
            <person name="Gaillardin C."/>
            <person name="Tallada V.A."/>
            <person name="Garzon A."/>
            <person name="Thode G."/>
            <person name="Daga R.R."/>
            <person name="Cruzado L."/>
            <person name="Jimenez J."/>
            <person name="Sanchez M."/>
            <person name="del Rey F."/>
            <person name="Benito J."/>
            <person name="Dominguez A."/>
            <person name="Revuelta J.L."/>
            <person name="Moreno S."/>
            <person name="Armstrong J."/>
            <person name="Forsburg S.L."/>
            <person name="Cerutti L."/>
            <person name="Lowe T."/>
            <person name="McCombie W.R."/>
            <person name="Paulsen I."/>
            <person name="Potashkin J."/>
            <person name="Shpakovski G.V."/>
            <person name="Ussery D."/>
            <person name="Barrell B.G."/>
            <person name="Nurse P."/>
        </authorList>
    </citation>
    <scope>NUCLEOTIDE SEQUENCE [LARGE SCALE GENOMIC DNA]</scope>
    <source>
        <strain>972 / ATCC 24843</strain>
    </source>
</reference>
<reference key="2">
    <citation type="submission" date="1997-04" db="EMBL/GenBank/DDBJ databases">
        <authorList>
            <person name="Jang Y.-J."/>
            <person name="Yoo H.-S."/>
        </authorList>
    </citation>
    <scope>NUCLEOTIDE SEQUENCE [MRNA] OF 100-141</scope>
    <source>
        <strain>972 / ATCC 24843</strain>
    </source>
</reference>
<reference key="3">
    <citation type="journal article" date="2006" name="Nat. Biotechnol.">
        <title>ORFeome cloning and global analysis of protein localization in the fission yeast Schizosaccharomyces pombe.</title>
        <authorList>
            <person name="Matsuyama A."/>
            <person name="Arai R."/>
            <person name="Yashiroda Y."/>
            <person name="Shirai A."/>
            <person name="Kamata A."/>
            <person name="Sekido S."/>
            <person name="Kobayashi Y."/>
            <person name="Hashimoto A."/>
            <person name="Hamamoto M."/>
            <person name="Hiraoka Y."/>
            <person name="Horinouchi S."/>
            <person name="Yoshida M."/>
        </authorList>
    </citation>
    <scope>SUBCELLULAR LOCATION [LARGE SCALE ANALYSIS]</scope>
</reference>
<reference key="4">
    <citation type="journal article" date="2008" name="J. Proteome Res.">
        <title>Phosphoproteome analysis of fission yeast.</title>
        <authorList>
            <person name="Wilson-Grady J.T."/>
            <person name="Villen J."/>
            <person name="Gygi S.P."/>
        </authorList>
    </citation>
    <scope>PHOSPHORYLATION [LARGE SCALE ANALYSIS] AT SER-68 AND SER-70</scope>
    <scope>IDENTIFICATION BY MASS SPECTROMETRY</scope>
</reference>
<sequence>MSVAKAKGAQKTVQKGIHNKVAKKVRTSTTFRRPKTLQLSRKPKYARKSVAHAPRLDEYKIIVNPINSESAMKKIEDDNTLVFHVHLKANKFTIKEAVRKLYSVEPVKINTLIRPNGTKKAFVKLSADADALDVANRIGFL</sequence>
<proteinExistence type="evidence at protein level"/>
<dbReference type="EMBL" id="CU329671">
    <property type="protein sequence ID" value="CAB53734.1"/>
    <property type="molecule type" value="Genomic_DNA"/>
</dbReference>
<dbReference type="EMBL" id="U97386">
    <property type="protein sequence ID" value="AAB63878.1"/>
    <property type="molecule type" value="mRNA"/>
</dbReference>
<dbReference type="PIR" id="T37983">
    <property type="entry name" value="T37983"/>
</dbReference>
<dbReference type="RefSeq" id="NP_595167.1">
    <property type="nucleotide sequence ID" value="NM_001021076.2"/>
</dbReference>
<dbReference type="PDB" id="8ESQ">
    <property type="method" value="EM"/>
    <property type="resolution" value="2.80 A"/>
    <property type="chains" value="X=1-141"/>
</dbReference>
<dbReference type="PDB" id="8ESR">
    <property type="method" value="EM"/>
    <property type="resolution" value="3.20 A"/>
    <property type="chains" value="X=1-141"/>
</dbReference>
<dbReference type="PDB" id="8ETC">
    <property type="method" value="EM"/>
    <property type="resolution" value="3.10 A"/>
    <property type="chains" value="X=1-141"/>
</dbReference>
<dbReference type="PDB" id="8ETG">
    <property type="method" value="EM"/>
    <property type="resolution" value="3.40 A"/>
    <property type="chains" value="X=1-141"/>
</dbReference>
<dbReference type="PDB" id="8ETI">
    <property type="method" value="EM"/>
    <property type="resolution" value="3.70 A"/>
    <property type="chains" value="X=1-141"/>
</dbReference>
<dbReference type="PDB" id="8EUG">
    <property type="method" value="EM"/>
    <property type="resolution" value="2.80 A"/>
    <property type="chains" value="X=1-141"/>
</dbReference>
<dbReference type="PDB" id="8EUI">
    <property type="method" value="EM"/>
    <property type="resolution" value="3.10 A"/>
    <property type="chains" value="X=1-141"/>
</dbReference>
<dbReference type="PDB" id="9AXT">
    <property type="method" value="EM"/>
    <property type="resolution" value="2.40 A"/>
    <property type="chains" value="Bj=1-141"/>
</dbReference>
<dbReference type="PDB" id="9AXU">
    <property type="method" value="EM"/>
    <property type="resolution" value="1.94 A"/>
    <property type="chains" value="j=1-141"/>
</dbReference>
<dbReference type="PDB" id="9AXV">
    <property type="method" value="EM"/>
    <property type="resolution" value="2.40 A"/>
    <property type="chains" value="Bj=1-141"/>
</dbReference>
<dbReference type="PDBsum" id="8ESQ"/>
<dbReference type="PDBsum" id="8ESR"/>
<dbReference type="PDBsum" id="8ETC"/>
<dbReference type="PDBsum" id="8ETG"/>
<dbReference type="PDBsum" id="8ETI"/>
<dbReference type="PDBsum" id="8EUG"/>
<dbReference type="PDBsum" id="8EUI"/>
<dbReference type="PDBsum" id="9AXT"/>
<dbReference type="PDBsum" id="9AXU"/>
<dbReference type="PDBsum" id="9AXV"/>
<dbReference type="EMDB" id="EMD-43972"/>
<dbReference type="EMDB" id="EMD-43973"/>
<dbReference type="EMDB" id="EMD-43976"/>
<dbReference type="SMR" id="Q10330"/>
<dbReference type="BioGRID" id="276254">
    <property type="interactions" value="11"/>
</dbReference>
<dbReference type="FunCoup" id="Q10330">
    <property type="interactions" value="419"/>
</dbReference>
<dbReference type="IntAct" id="Q10330">
    <property type="interactions" value="2"/>
</dbReference>
<dbReference type="STRING" id="284812.Q10330"/>
<dbReference type="iPTMnet" id="Q10330"/>
<dbReference type="PaxDb" id="4896-SPBC106.18.1"/>
<dbReference type="EnsemblFungi" id="SPBC106.18.1">
    <property type="protein sequence ID" value="SPBC106.18.1:pep"/>
    <property type="gene ID" value="SPBC106.18"/>
</dbReference>
<dbReference type="GeneID" id="2539701"/>
<dbReference type="KEGG" id="spo:2539701"/>
<dbReference type="PomBase" id="SPBC106.18">
    <property type="gene designation" value="rpl2501"/>
</dbReference>
<dbReference type="VEuPathDB" id="FungiDB:SPBC106.18"/>
<dbReference type="eggNOG" id="KOG1751">
    <property type="taxonomic scope" value="Eukaryota"/>
</dbReference>
<dbReference type="HOGENOM" id="CLU_037562_0_1_1"/>
<dbReference type="InParanoid" id="Q10330"/>
<dbReference type="OMA" id="FRIIRHP"/>
<dbReference type="PhylomeDB" id="Q10330"/>
<dbReference type="PRO" id="PR:Q10330"/>
<dbReference type="Proteomes" id="UP000002485">
    <property type="component" value="Chromosome II"/>
</dbReference>
<dbReference type="GO" id="GO:0005829">
    <property type="term" value="C:cytosol"/>
    <property type="evidence" value="ECO:0007005"/>
    <property type="project" value="PomBase"/>
</dbReference>
<dbReference type="GO" id="GO:0022625">
    <property type="term" value="C:cytosolic large ribosomal subunit"/>
    <property type="evidence" value="ECO:0000269"/>
    <property type="project" value="PomBase"/>
</dbReference>
<dbReference type="GO" id="GO:0030684">
    <property type="term" value="C:preribosome"/>
    <property type="evidence" value="ECO:0000314"/>
    <property type="project" value="PomBase"/>
</dbReference>
<dbReference type="GO" id="GO:0019843">
    <property type="term" value="F:rRNA binding"/>
    <property type="evidence" value="ECO:0000266"/>
    <property type="project" value="PomBase"/>
</dbReference>
<dbReference type="GO" id="GO:0003735">
    <property type="term" value="F:structural constituent of ribosome"/>
    <property type="evidence" value="ECO:0000318"/>
    <property type="project" value="GO_Central"/>
</dbReference>
<dbReference type="GO" id="GO:0002181">
    <property type="term" value="P:cytoplasmic translation"/>
    <property type="evidence" value="ECO:0000266"/>
    <property type="project" value="PomBase"/>
</dbReference>
<dbReference type="GO" id="GO:0180023">
    <property type="term" value="P:cytosolic large ribosomal subunit assembly"/>
    <property type="evidence" value="ECO:0000266"/>
    <property type="project" value="PomBase"/>
</dbReference>
<dbReference type="FunFam" id="3.30.70.330:FF:000035">
    <property type="entry name" value="60S ribosomal protein L23a"/>
    <property type="match status" value="1"/>
</dbReference>
<dbReference type="Gene3D" id="3.30.70.330">
    <property type="match status" value="1"/>
</dbReference>
<dbReference type="HAMAP" id="MF_01369_A">
    <property type="entry name" value="Ribosomal_uL23_A"/>
    <property type="match status" value="1"/>
</dbReference>
<dbReference type="InterPro" id="IPR012677">
    <property type="entry name" value="Nucleotide-bd_a/b_plait_sf"/>
</dbReference>
<dbReference type="InterPro" id="IPR013025">
    <property type="entry name" value="Ribosomal_uL23-like"/>
</dbReference>
<dbReference type="InterPro" id="IPR012678">
    <property type="entry name" value="Ribosomal_uL23/eL15/eS24_sf"/>
</dbReference>
<dbReference type="InterPro" id="IPR001014">
    <property type="entry name" value="Ribosomal_uL23_CS"/>
</dbReference>
<dbReference type="InterPro" id="IPR005633">
    <property type="entry name" value="Ribosomal_uL23_N"/>
</dbReference>
<dbReference type="NCBIfam" id="NF011118">
    <property type="entry name" value="PRK14548.1"/>
    <property type="match status" value="1"/>
</dbReference>
<dbReference type="PANTHER" id="PTHR11620">
    <property type="entry name" value="60S RIBOSOMAL PROTEIN L23A"/>
    <property type="match status" value="1"/>
</dbReference>
<dbReference type="Pfam" id="PF00276">
    <property type="entry name" value="Ribosomal_L23"/>
    <property type="match status" value="1"/>
</dbReference>
<dbReference type="Pfam" id="PF03939">
    <property type="entry name" value="Ribosomal_L23eN"/>
    <property type="match status" value="1"/>
</dbReference>
<dbReference type="SUPFAM" id="SSF54189">
    <property type="entry name" value="Ribosomal proteins S24e, L23 and L15e"/>
    <property type="match status" value="1"/>
</dbReference>
<dbReference type="PROSITE" id="PS00050">
    <property type="entry name" value="RIBOSOMAL_L23"/>
    <property type="match status" value="1"/>
</dbReference>
<organism>
    <name type="scientific">Schizosaccharomyces pombe (strain 972 / ATCC 24843)</name>
    <name type="common">Fission yeast</name>
    <dbReference type="NCBI Taxonomy" id="284812"/>
    <lineage>
        <taxon>Eukaryota</taxon>
        <taxon>Fungi</taxon>
        <taxon>Dikarya</taxon>
        <taxon>Ascomycota</taxon>
        <taxon>Taphrinomycotina</taxon>
        <taxon>Schizosaccharomycetes</taxon>
        <taxon>Schizosaccharomycetales</taxon>
        <taxon>Schizosaccharomycetaceae</taxon>
        <taxon>Schizosaccharomyces</taxon>
    </lineage>
</organism>
<evidence type="ECO:0000250" key="1"/>
<evidence type="ECO:0000250" key="2">
    <source>
        <dbReference type="UniProtKB" id="P04456"/>
    </source>
</evidence>
<evidence type="ECO:0000269" key="3">
    <source>
    </source>
</evidence>
<evidence type="ECO:0000269" key="4">
    <source>
    </source>
</evidence>
<evidence type="ECO:0000305" key="5"/>
<evidence type="ECO:0007829" key="6">
    <source>
        <dbReference type="PDB" id="8ETC"/>
    </source>
</evidence>
<evidence type="ECO:0007829" key="7">
    <source>
        <dbReference type="PDB" id="8ETG"/>
    </source>
</evidence>
<feature type="chain" id="PRO_0000129481" description="Large ribosomal subunit protein uL23A">
    <location>
        <begin position="1"/>
        <end position="141"/>
    </location>
</feature>
<feature type="modified residue" description="Phosphoserine" evidence="4">
    <location>
        <position position="68"/>
    </location>
</feature>
<feature type="modified residue" description="Phosphoserine" evidence="4">
    <location>
        <position position="70"/>
    </location>
</feature>
<feature type="helix" evidence="7">
    <location>
        <begin position="4"/>
        <end position="7"/>
    </location>
</feature>
<feature type="turn" evidence="7">
    <location>
        <begin position="8"/>
        <end position="10"/>
    </location>
</feature>
<feature type="helix" evidence="7">
    <location>
        <begin position="13"/>
        <end position="15"/>
    </location>
</feature>
<feature type="strand" evidence="6">
    <location>
        <begin position="47"/>
        <end position="50"/>
    </location>
</feature>
<feature type="helix" evidence="6">
    <location>
        <begin position="58"/>
        <end position="61"/>
    </location>
</feature>
<feature type="strand" evidence="6">
    <location>
        <begin position="62"/>
        <end position="65"/>
    </location>
</feature>
<feature type="helix" evidence="6">
    <location>
        <begin position="69"/>
        <end position="78"/>
    </location>
</feature>
<feature type="strand" evidence="6">
    <location>
        <begin position="79"/>
        <end position="85"/>
    </location>
</feature>
<feature type="helix" evidence="6">
    <location>
        <begin position="91"/>
        <end position="102"/>
    </location>
</feature>
<feature type="strand" evidence="6">
    <location>
        <begin position="106"/>
        <end position="113"/>
    </location>
</feature>
<feature type="strand" evidence="6">
    <location>
        <begin position="119"/>
        <end position="125"/>
    </location>
</feature>
<feature type="strand" evidence="7">
    <location>
        <begin position="127"/>
        <end position="129"/>
    </location>
</feature>
<feature type="helix" evidence="6">
    <location>
        <begin position="131"/>
        <end position="138"/>
    </location>
</feature>
<protein>
    <recommendedName>
        <fullName evidence="5">Large ribosomal subunit protein uL23A</fullName>
    </recommendedName>
    <alternativeName>
        <fullName>60S ribosomal protein L25-A</fullName>
    </alternativeName>
</protein>
<keyword id="KW-0002">3D-structure</keyword>
<keyword id="KW-0963">Cytoplasm</keyword>
<keyword id="KW-0597">Phosphoprotein</keyword>
<keyword id="KW-1185">Reference proteome</keyword>
<keyword id="KW-0687">Ribonucleoprotein</keyword>
<keyword id="KW-0689">Ribosomal protein</keyword>
<keyword id="KW-0694">RNA-binding</keyword>
<keyword id="KW-0699">rRNA-binding</keyword>
<gene>
    <name type="primary">rpl2501</name>
    <name type="synonym">rpl25a</name>
    <name type="ORF">SPBC106.18</name>
</gene>